<organism>
    <name type="scientific">Sulfurihydrogenibium sp. (strain YO3AOP1)</name>
    <dbReference type="NCBI Taxonomy" id="436114"/>
    <lineage>
        <taxon>Bacteria</taxon>
        <taxon>Pseudomonadati</taxon>
        <taxon>Aquificota</taxon>
        <taxon>Aquificia</taxon>
        <taxon>Aquificales</taxon>
        <taxon>Hydrogenothermaceae</taxon>
        <taxon>Sulfurihydrogenibium</taxon>
    </lineage>
</organism>
<reference key="1">
    <citation type="journal article" date="2009" name="J. Bacteriol.">
        <title>Complete and draft genome sequences of six members of the Aquificales.</title>
        <authorList>
            <person name="Reysenbach A.-L."/>
            <person name="Hamamura N."/>
            <person name="Podar M."/>
            <person name="Griffiths E."/>
            <person name="Ferreira S."/>
            <person name="Hochstein R."/>
            <person name="Heidelberg J."/>
            <person name="Johnson J."/>
            <person name="Mead D."/>
            <person name="Pohorille A."/>
            <person name="Sarmiento M."/>
            <person name="Schweighofer K."/>
            <person name="Seshadri R."/>
            <person name="Voytek M.A."/>
        </authorList>
    </citation>
    <scope>NUCLEOTIDE SEQUENCE [LARGE SCALE GENOMIC DNA]</scope>
    <source>
        <strain>YO3AOP1</strain>
    </source>
</reference>
<accession>B2V7Y0</accession>
<evidence type="ECO:0000255" key="1">
    <source>
        <dbReference type="HAMAP-Rule" id="MF_00446"/>
    </source>
</evidence>
<dbReference type="EC" id="4.1.1.11" evidence="1"/>
<dbReference type="EMBL" id="CP001080">
    <property type="protein sequence ID" value="ACD66053.1"/>
    <property type="molecule type" value="Genomic_DNA"/>
</dbReference>
<dbReference type="RefSeq" id="WP_012459135.1">
    <property type="nucleotide sequence ID" value="NC_010730.1"/>
</dbReference>
<dbReference type="SMR" id="B2V7Y0"/>
<dbReference type="STRING" id="436114.SYO3AOP1_0410"/>
<dbReference type="KEGG" id="sul:SYO3AOP1_0410"/>
<dbReference type="eggNOG" id="COG0853">
    <property type="taxonomic scope" value="Bacteria"/>
</dbReference>
<dbReference type="HOGENOM" id="CLU_115305_2_1_0"/>
<dbReference type="UniPathway" id="UPA00028">
    <property type="reaction ID" value="UER00002"/>
</dbReference>
<dbReference type="GO" id="GO:0005829">
    <property type="term" value="C:cytosol"/>
    <property type="evidence" value="ECO:0007669"/>
    <property type="project" value="TreeGrafter"/>
</dbReference>
<dbReference type="GO" id="GO:0004068">
    <property type="term" value="F:aspartate 1-decarboxylase activity"/>
    <property type="evidence" value="ECO:0007669"/>
    <property type="project" value="UniProtKB-UniRule"/>
</dbReference>
<dbReference type="GO" id="GO:0006523">
    <property type="term" value="P:alanine biosynthetic process"/>
    <property type="evidence" value="ECO:0007669"/>
    <property type="project" value="InterPro"/>
</dbReference>
<dbReference type="GO" id="GO:0015940">
    <property type="term" value="P:pantothenate biosynthetic process"/>
    <property type="evidence" value="ECO:0007669"/>
    <property type="project" value="UniProtKB-UniRule"/>
</dbReference>
<dbReference type="CDD" id="cd06919">
    <property type="entry name" value="Asp_decarbox"/>
    <property type="match status" value="1"/>
</dbReference>
<dbReference type="Gene3D" id="2.40.40.20">
    <property type="match status" value="1"/>
</dbReference>
<dbReference type="HAMAP" id="MF_00446">
    <property type="entry name" value="PanD"/>
    <property type="match status" value="1"/>
</dbReference>
<dbReference type="InterPro" id="IPR009010">
    <property type="entry name" value="Asp_de-COase-like_dom_sf"/>
</dbReference>
<dbReference type="InterPro" id="IPR003190">
    <property type="entry name" value="Asp_decarbox"/>
</dbReference>
<dbReference type="NCBIfam" id="TIGR00223">
    <property type="entry name" value="panD"/>
    <property type="match status" value="1"/>
</dbReference>
<dbReference type="PANTHER" id="PTHR21012">
    <property type="entry name" value="ASPARTATE 1-DECARBOXYLASE"/>
    <property type="match status" value="1"/>
</dbReference>
<dbReference type="PANTHER" id="PTHR21012:SF0">
    <property type="entry name" value="ASPARTATE 1-DECARBOXYLASE"/>
    <property type="match status" value="1"/>
</dbReference>
<dbReference type="Pfam" id="PF02261">
    <property type="entry name" value="Asp_decarbox"/>
    <property type="match status" value="1"/>
</dbReference>
<dbReference type="PIRSF" id="PIRSF006246">
    <property type="entry name" value="Asp_decarbox"/>
    <property type="match status" value="1"/>
</dbReference>
<dbReference type="SUPFAM" id="SSF50692">
    <property type="entry name" value="ADC-like"/>
    <property type="match status" value="1"/>
</dbReference>
<comment type="function">
    <text evidence="1">Catalyzes the pyruvoyl-dependent decarboxylation of aspartate to produce beta-alanine.</text>
</comment>
<comment type="catalytic activity">
    <reaction evidence="1">
        <text>L-aspartate + H(+) = beta-alanine + CO2</text>
        <dbReference type="Rhea" id="RHEA:19497"/>
        <dbReference type="ChEBI" id="CHEBI:15378"/>
        <dbReference type="ChEBI" id="CHEBI:16526"/>
        <dbReference type="ChEBI" id="CHEBI:29991"/>
        <dbReference type="ChEBI" id="CHEBI:57966"/>
        <dbReference type="EC" id="4.1.1.11"/>
    </reaction>
</comment>
<comment type="cofactor">
    <cofactor evidence="1">
        <name>pyruvate</name>
        <dbReference type="ChEBI" id="CHEBI:15361"/>
    </cofactor>
    <text evidence="1">Binds 1 pyruvoyl group covalently per subunit.</text>
</comment>
<comment type="pathway">
    <text evidence="1">Cofactor biosynthesis; (R)-pantothenate biosynthesis; beta-alanine from L-aspartate: step 1/1.</text>
</comment>
<comment type="subunit">
    <text evidence="1">Heterooctamer of four alpha and four beta subunits.</text>
</comment>
<comment type="subcellular location">
    <subcellularLocation>
        <location evidence="1">Cytoplasm</location>
    </subcellularLocation>
</comment>
<comment type="PTM">
    <text evidence="1">Is synthesized initially as an inactive proenzyme, which is activated by self-cleavage at a specific serine bond to produce a beta-subunit with a hydroxyl group at its C-terminus and an alpha-subunit with a pyruvoyl group at its N-terminus.</text>
</comment>
<comment type="similarity">
    <text evidence="1">Belongs to the PanD family.</text>
</comment>
<keyword id="KW-0068">Autocatalytic cleavage</keyword>
<keyword id="KW-0963">Cytoplasm</keyword>
<keyword id="KW-0210">Decarboxylase</keyword>
<keyword id="KW-0456">Lyase</keyword>
<keyword id="KW-0566">Pantothenate biosynthesis</keyword>
<keyword id="KW-0670">Pyruvate</keyword>
<keyword id="KW-0704">Schiff base</keyword>
<keyword id="KW-0865">Zymogen</keyword>
<protein>
    <recommendedName>
        <fullName evidence="1">Aspartate 1-decarboxylase</fullName>
        <ecNumber evidence="1">4.1.1.11</ecNumber>
    </recommendedName>
    <alternativeName>
        <fullName evidence="1">Aspartate alpha-decarboxylase</fullName>
    </alternativeName>
    <component>
        <recommendedName>
            <fullName evidence="1">Aspartate 1-decarboxylase beta chain</fullName>
        </recommendedName>
    </component>
    <component>
        <recommendedName>
            <fullName evidence="1">Aspartate 1-decarboxylase alpha chain</fullName>
        </recommendedName>
    </component>
</protein>
<name>PAND_SULSY</name>
<gene>
    <name evidence="1" type="primary">panD</name>
    <name type="ordered locus">SYO3AOP1_0410</name>
</gene>
<feature type="chain" id="PRO_1000192047" description="Aspartate 1-decarboxylase beta chain" evidence="1">
    <location>
        <begin position="1"/>
        <end position="24"/>
    </location>
</feature>
<feature type="chain" id="PRO_1000192048" description="Aspartate 1-decarboxylase alpha chain" evidence="1">
    <location>
        <begin position="25"/>
        <end position="134"/>
    </location>
</feature>
<feature type="active site" description="Schiff-base intermediate with substrate; via pyruvic acid" evidence="1">
    <location>
        <position position="25"/>
    </location>
</feature>
<feature type="active site" description="Proton donor" evidence="1">
    <location>
        <position position="58"/>
    </location>
</feature>
<feature type="binding site" evidence="1">
    <location>
        <position position="57"/>
    </location>
    <ligand>
        <name>substrate</name>
    </ligand>
</feature>
<feature type="binding site" evidence="1">
    <location>
        <begin position="73"/>
        <end position="75"/>
    </location>
    <ligand>
        <name>substrate</name>
    </ligand>
</feature>
<feature type="modified residue" description="Pyruvic acid (Ser)" evidence="1">
    <location>
        <position position="25"/>
    </location>
</feature>
<sequence length="134" mass="15053">MYRTLLKSKVHRIKITGADLHYEGSLTLDEEIMEAANLIPFEKIEVYNVNNGQRFSTYVIPGVRYSGECILNGAAARLGHYGDIIIIASYAAVNEKDLESFKVNLVYIDENTNTIKEKKEVLALNSKVLAKTNE</sequence>
<proteinExistence type="inferred from homology"/>